<proteinExistence type="inferred from homology"/>
<feature type="chain" id="PRO_1000139582" description="CTP synthase">
    <location>
        <begin position="1"/>
        <end position="544"/>
    </location>
</feature>
<feature type="domain" description="Glutamine amidotransferase type-1" evidence="1">
    <location>
        <begin position="291"/>
        <end position="543"/>
    </location>
</feature>
<feature type="region of interest" description="Amidoligase domain" evidence="1">
    <location>
        <begin position="1"/>
        <end position="265"/>
    </location>
</feature>
<feature type="active site" description="Nucleophile; for glutamine hydrolysis" evidence="1">
    <location>
        <position position="382"/>
    </location>
</feature>
<feature type="active site" evidence="1">
    <location>
        <position position="516"/>
    </location>
</feature>
<feature type="active site" evidence="1">
    <location>
        <position position="518"/>
    </location>
</feature>
<feature type="binding site" evidence="1">
    <location>
        <position position="13"/>
    </location>
    <ligand>
        <name>CTP</name>
        <dbReference type="ChEBI" id="CHEBI:37563"/>
        <note>allosteric inhibitor</note>
    </ligand>
</feature>
<feature type="binding site" evidence="1">
    <location>
        <position position="13"/>
    </location>
    <ligand>
        <name>UTP</name>
        <dbReference type="ChEBI" id="CHEBI:46398"/>
    </ligand>
</feature>
<feature type="binding site" evidence="1">
    <location>
        <begin position="14"/>
        <end position="19"/>
    </location>
    <ligand>
        <name>ATP</name>
        <dbReference type="ChEBI" id="CHEBI:30616"/>
    </ligand>
</feature>
<feature type="binding site" evidence="1">
    <location>
        <position position="54"/>
    </location>
    <ligand>
        <name>L-glutamine</name>
        <dbReference type="ChEBI" id="CHEBI:58359"/>
    </ligand>
</feature>
<feature type="binding site" evidence="1">
    <location>
        <position position="71"/>
    </location>
    <ligand>
        <name>ATP</name>
        <dbReference type="ChEBI" id="CHEBI:30616"/>
    </ligand>
</feature>
<feature type="binding site" evidence="1">
    <location>
        <position position="71"/>
    </location>
    <ligand>
        <name>Mg(2+)</name>
        <dbReference type="ChEBI" id="CHEBI:18420"/>
    </ligand>
</feature>
<feature type="binding site" evidence="1">
    <location>
        <position position="139"/>
    </location>
    <ligand>
        <name>Mg(2+)</name>
        <dbReference type="ChEBI" id="CHEBI:18420"/>
    </ligand>
</feature>
<feature type="binding site" evidence="1">
    <location>
        <begin position="146"/>
        <end position="148"/>
    </location>
    <ligand>
        <name>CTP</name>
        <dbReference type="ChEBI" id="CHEBI:37563"/>
        <note>allosteric inhibitor</note>
    </ligand>
</feature>
<feature type="binding site" evidence="1">
    <location>
        <begin position="186"/>
        <end position="191"/>
    </location>
    <ligand>
        <name>CTP</name>
        <dbReference type="ChEBI" id="CHEBI:37563"/>
        <note>allosteric inhibitor</note>
    </ligand>
</feature>
<feature type="binding site" evidence="1">
    <location>
        <begin position="186"/>
        <end position="191"/>
    </location>
    <ligand>
        <name>UTP</name>
        <dbReference type="ChEBI" id="CHEBI:46398"/>
    </ligand>
</feature>
<feature type="binding site" evidence="1">
    <location>
        <position position="222"/>
    </location>
    <ligand>
        <name>CTP</name>
        <dbReference type="ChEBI" id="CHEBI:37563"/>
        <note>allosteric inhibitor</note>
    </ligand>
</feature>
<feature type="binding site" evidence="1">
    <location>
        <position position="222"/>
    </location>
    <ligand>
        <name>UTP</name>
        <dbReference type="ChEBI" id="CHEBI:46398"/>
    </ligand>
</feature>
<feature type="binding site" evidence="1">
    <location>
        <position position="355"/>
    </location>
    <ligand>
        <name>L-glutamine</name>
        <dbReference type="ChEBI" id="CHEBI:58359"/>
    </ligand>
</feature>
<feature type="binding site" evidence="1">
    <location>
        <begin position="383"/>
        <end position="386"/>
    </location>
    <ligand>
        <name>L-glutamine</name>
        <dbReference type="ChEBI" id="CHEBI:58359"/>
    </ligand>
</feature>
<feature type="binding site" evidence="1">
    <location>
        <position position="406"/>
    </location>
    <ligand>
        <name>L-glutamine</name>
        <dbReference type="ChEBI" id="CHEBI:58359"/>
    </ligand>
</feature>
<feature type="binding site" evidence="1">
    <location>
        <position position="471"/>
    </location>
    <ligand>
        <name>L-glutamine</name>
        <dbReference type="ChEBI" id="CHEBI:58359"/>
    </ligand>
</feature>
<protein>
    <recommendedName>
        <fullName evidence="1">CTP synthase</fullName>
        <ecNumber evidence="1">6.3.4.2</ecNumber>
    </recommendedName>
    <alternativeName>
        <fullName evidence="1">Cytidine 5'-triphosphate synthase</fullName>
    </alternativeName>
    <alternativeName>
        <fullName evidence="1">Cytidine triphosphate synthetase</fullName>
        <shortName evidence="1">CTP synthetase</shortName>
        <shortName evidence="1">CTPS</shortName>
    </alternativeName>
    <alternativeName>
        <fullName evidence="1">UTP--ammonia ligase</fullName>
    </alternativeName>
</protein>
<organism>
    <name type="scientific">Rhizorhabdus wittichii (strain DSM 6014 / CCUG 31198 / JCM 15750 / NBRC 105917 / EY 4224 / RW1)</name>
    <name type="common">Sphingomonas wittichii</name>
    <dbReference type="NCBI Taxonomy" id="392499"/>
    <lineage>
        <taxon>Bacteria</taxon>
        <taxon>Pseudomonadati</taxon>
        <taxon>Pseudomonadota</taxon>
        <taxon>Alphaproteobacteria</taxon>
        <taxon>Sphingomonadales</taxon>
        <taxon>Sphingomonadaceae</taxon>
        <taxon>Rhizorhabdus</taxon>
    </lineage>
</organism>
<reference key="1">
    <citation type="journal article" date="2010" name="J. Bacteriol.">
        <title>Genome sequence of the dioxin-mineralizing bacterium Sphingomonas wittichii RW1.</title>
        <authorList>
            <person name="Miller T.R."/>
            <person name="Delcher A.L."/>
            <person name="Salzberg S.L."/>
            <person name="Saunders E."/>
            <person name="Detter J.C."/>
            <person name="Halden R.U."/>
        </authorList>
    </citation>
    <scope>NUCLEOTIDE SEQUENCE [LARGE SCALE GENOMIC DNA]</scope>
    <source>
        <strain>DSM 6014 / CCUG 31198 / JCM 15750 / NBRC 105917 / EY 4224 / RW1</strain>
    </source>
</reference>
<sequence length="544" mass="59460">MARFIFITGGVVSSLGKGLMAASLAALLQARGYKVRIRKFDPYLNVDPGTMSPYQHGEVYVTDDGAETDLDLGHYERFTGVPGRQSDNITSGRIYQTIIQKERRGDYLGATVQVIPHVTDAIKEFARADTEGLDFVLCEIGGTVGDIESLPFMEAIRQLRNDLGRGNSIFVHLTLVPYIAAAGELKTKPTQHSVRDLTSLGIQPDVLVCRCDRPLPEGERAKIALFCNVPTEAVIPALDASSIYGVPLQYHEEGLDEAVLSAFGIEAKDEPDLTRWTEIMDRLENPEGEVTIGVVGKYVGLLDAYKSLHEALVHGGIANRVKVNIRWIDAELFEQEEGGIAAQLEPMHAILVPGGFGERGSEGKIAAVRFARERKVPYFGICLGMQMACIEGARNTAGIAAASTTEFGPTDEPVVGMITEWMSEDGLQKREAGGDLGGTMRLGAYDARLSGNSHAATIYGATDISERHRHRYEVNVHYRESLERGGLVFSGMSPDGELPEVVERPDHPWFVGVQFHPELKSKPFDPHPLFASFIAAALQQSRLV</sequence>
<accession>A5V8U1</accession>
<gene>
    <name evidence="1" type="primary">pyrG</name>
    <name type="ordered locus">Swit_2348</name>
</gene>
<keyword id="KW-0067">ATP-binding</keyword>
<keyword id="KW-0315">Glutamine amidotransferase</keyword>
<keyword id="KW-0436">Ligase</keyword>
<keyword id="KW-0460">Magnesium</keyword>
<keyword id="KW-0479">Metal-binding</keyword>
<keyword id="KW-0547">Nucleotide-binding</keyword>
<keyword id="KW-0665">Pyrimidine biosynthesis</keyword>
<keyword id="KW-1185">Reference proteome</keyword>
<name>PYRG_RHIWR</name>
<comment type="function">
    <text evidence="1">Catalyzes the ATP-dependent amination of UTP to CTP with either L-glutamine or ammonia as the source of nitrogen. Regulates intracellular CTP levels through interactions with the four ribonucleotide triphosphates.</text>
</comment>
<comment type="catalytic activity">
    <reaction evidence="1">
        <text>UTP + L-glutamine + ATP + H2O = CTP + L-glutamate + ADP + phosphate + 2 H(+)</text>
        <dbReference type="Rhea" id="RHEA:26426"/>
        <dbReference type="ChEBI" id="CHEBI:15377"/>
        <dbReference type="ChEBI" id="CHEBI:15378"/>
        <dbReference type="ChEBI" id="CHEBI:29985"/>
        <dbReference type="ChEBI" id="CHEBI:30616"/>
        <dbReference type="ChEBI" id="CHEBI:37563"/>
        <dbReference type="ChEBI" id="CHEBI:43474"/>
        <dbReference type="ChEBI" id="CHEBI:46398"/>
        <dbReference type="ChEBI" id="CHEBI:58359"/>
        <dbReference type="ChEBI" id="CHEBI:456216"/>
        <dbReference type="EC" id="6.3.4.2"/>
    </reaction>
</comment>
<comment type="catalytic activity">
    <reaction evidence="1">
        <text>L-glutamine + H2O = L-glutamate + NH4(+)</text>
        <dbReference type="Rhea" id="RHEA:15889"/>
        <dbReference type="ChEBI" id="CHEBI:15377"/>
        <dbReference type="ChEBI" id="CHEBI:28938"/>
        <dbReference type="ChEBI" id="CHEBI:29985"/>
        <dbReference type="ChEBI" id="CHEBI:58359"/>
    </reaction>
</comment>
<comment type="catalytic activity">
    <reaction evidence="1">
        <text>UTP + NH4(+) + ATP = CTP + ADP + phosphate + 2 H(+)</text>
        <dbReference type="Rhea" id="RHEA:16597"/>
        <dbReference type="ChEBI" id="CHEBI:15378"/>
        <dbReference type="ChEBI" id="CHEBI:28938"/>
        <dbReference type="ChEBI" id="CHEBI:30616"/>
        <dbReference type="ChEBI" id="CHEBI:37563"/>
        <dbReference type="ChEBI" id="CHEBI:43474"/>
        <dbReference type="ChEBI" id="CHEBI:46398"/>
        <dbReference type="ChEBI" id="CHEBI:456216"/>
    </reaction>
</comment>
<comment type="activity regulation">
    <text evidence="1">Allosterically activated by GTP, when glutamine is the substrate; GTP has no effect on the reaction when ammonia is the substrate. The allosteric effector GTP functions by stabilizing the protein conformation that binds the tetrahedral intermediate(s) formed during glutamine hydrolysis. Inhibited by the product CTP, via allosteric rather than competitive inhibition.</text>
</comment>
<comment type="pathway">
    <text evidence="1">Pyrimidine metabolism; CTP biosynthesis via de novo pathway; CTP from UDP: step 2/2.</text>
</comment>
<comment type="subunit">
    <text evidence="1">Homotetramer.</text>
</comment>
<comment type="miscellaneous">
    <text evidence="1">CTPSs have evolved a hybrid strategy for distinguishing between UTP and CTP. The overlapping regions of the product feedback inhibitory and substrate sites recognize a common feature in both compounds, the triphosphate moiety. To differentiate isosteric substrate and product pyrimidine rings, an additional pocket far from the expected kinase/ligase catalytic site, specifically recognizes the cytosine and ribose portions of the product inhibitor.</text>
</comment>
<comment type="similarity">
    <text evidence="1">Belongs to the CTP synthase family.</text>
</comment>
<evidence type="ECO:0000255" key="1">
    <source>
        <dbReference type="HAMAP-Rule" id="MF_01227"/>
    </source>
</evidence>
<dbReference type="EC" id="6.3.4.2" evidence="1"/>
<dbReference type="EMBL" id="CP000699">
    <property type="protein sequence ID" value="ABQ68707.1"/>
    <property type="molecule type" value="Genomic_DNA"/>
</dbReference>
<dbReference type="SMR" id="A5V8U1"/>
<dbReference type="STRING" id="392499.Swit_2348"/>
<dbReference type="MEROPS" id="C26.964"/>
<dbReference type="PaxDb" id="392499-Swit_2348"/>
<dbReference type="KEGG" id="swi:Swit_2348"/>
<dbReference type="eggNOG" id="COG0504">
    <property type="taxonomic scope" value="Bacteria"/>
</dbReference>
<dbReference type="HOGENOM" id="CLU_011675_5_0_5"/>
<dbReference type="OrthoDB" id="9801107at2"/>
<dbReference type="UniPathway" id="UPA00159">
    <property type="reaction ID" value="UER00277"/>
</dbReference>
<dbReference type="Proteomes" id="UP000001989">
    <property type="component" value="Chromosome"/>
</dbReference>
<dbReference type="GO" id="GO:0005829">
    <property type="term" value="C:cytosol"/>
    <property type="evidence" value="ECO:0007669"/>
    <property type="project" value="TreeGrafter"/>
</dbReference>
<dbReference type="GO" id="GO:0005524">
    <property type="term" value="F:ATP binding"/>
    <property type="evidence" value="ECO:0007669"/>
    <property type="project" value="UniProtKB-KW"/>
</dbReference>
<dbReference type="GO" id="GO:0003883">
    <property type="term" value="F:CTP synthase activity"/>
    <property type="evidence" value="ECO:0007669"/>
    <property type="project" value="UniProtKB-UniRule"/>
</dbReference>
<dbReference type="GO" id="GO:0004359">
    <property type="term" value="F:glutaminase activity"/>
    <property type="evidence" value="ECO:0007669"/>
    <property type="project" value="RHEA"/>
</dbReference>
<dbReference type="GO" id="GO:0042802">
    <property type="term" value="F:identical protein binding"/>
    <property type="evidence" value="ECO:0007669"/>
    <property type="project" value="TreeGrafter"/>
</dbReference>
<dbReference type="GO" id="GO:0046872">
    <property type="term" value="F:metal ion binding"/>
    <property type="evidence" value="ECO:0007669"/>
    <property type="project" value="UniProtKB-KW"/>
</dbReference>
<dbReference type="GO" id="GO:0044210">
    <property type="term" value="P:'de novo' CTP biosynthetic process"/>
    <property type="evidence" value="ECO:0007669"/>
    <property type="project" value="UniProtKB-UniRule"/>
</dbReference>
<dbReference type="GO" id="GO:0019856">
    <property type="term" value="P:pyrimidine nucleobase biosynthetic process"/>
    <property type="evidence" value="ECO:0007669"/>
    <property type="project" value="TreeGrafter"/>
</dbReference>
<dbReference type="CDD" id="cd03113">
    <property type="entry name" value="CTPS_N"/>
    <property type="match status" value="1"/>
</dbReference>
<dbReference type="CDD" id="cd01746">
    <property type="entry name" value="GATase1_CTP_Synthase"/>
    <property type="match status" value="1"/>
</dbReference>
<dbReference type="FunFam" id="3.40.50.300:FF:000009">
    <property type="entry name" value="CTP synthase"/>
    <property type="match status" value="1"/>
</dbReference>
<dbReference type="FunFam" id="3.40.50.880:FF:000002">
    <property type="entry name" value="CTP synthase"/>
    <property type="match status" value="1"/>
</dbReference>
<dbReference type="Gene3D" id="3.40.50.880">
    <property type="match status" value="1"/>
</dbReference>
<dbReference type="Gene3D" id="3.40.50.300">
    <property type="entry name" value="P-loop containing nucleotide triphosphate hydrolases"/>
    <property type="match status" value="1"/>
</dbReference>
<dbReference type="HAMAP" id="MF_01227">
    <property type="entry name" value="PyrG"/>
    <property type="match status" value="1"/>
</dbReference>
<dbReference type="InterPro" id="IPR029062">
    <property type="entry name" value="Class_I_gatase-like"/>
</dbReference>
<dbReference type="InterPro" id="IPR004468">
    <property type="entry name" value="CTP_synthase"/>
</dbReference>
<dbReference type="InterPro" id="IPR017456">
    <property type="entry name" value="CTP_synthase_N"/>
</dbReference>
<dbReference type="InterPro" id="IPR017926">
    <property type="entry name" value="GATASE"/>
</dbReference>
<dbReference type="InterPro" id="IPR033828">
    <property type="entry name" value="GATase1_CTP_Synthase"/>
</dbReference>
<dbReference type="InterPro" id="IPR027417">
    <property type="entry name" value="P-loop_NTPase"/>
</dbReference>
<dbReference type="NCBIfam" id="NF003792">
    <property type="entry name" value="PRK05380.1"/>
    <property type="match status" value="1"/>
</dbReference>
<dbReference type="NCBIfam" id="TIGR00337">
    <property type="entry name" value="PyrG"/>
    <property type="match status" value="1"/>
</dbReference>
<dbReference type="PANTHER" id="PTHR11550">
    <property type="entry name" value="CTP SYNTHASE"/>
    <property type="match status" value="1"/>
</dbReference>
<dbReference type="PANTHER" id="PTHR11550:SF0">
    <property type="entry name" value="CTP SYNTHASE-RELATED"/>
    <property type="match status" value="1"/>
</dbReference>
<dbReference type="Pfam" id="PF06418">
    <property type="entry name" value="CTP_synth_N"/>
    <property type="match status" value="1"/>
</dbReference>
<dbReference type="Pfam" id="PF00117">
    <property type="entry name" value="GATase"/>
    <property type="match status" value="1"/>
</dbReference>
<dbReference type="SUPFAM" id="SSF52317">
    <property type="entry name" value="Class I glutamine amidotransferase-like"/>
    <property type="match status" value="1"/>
</dbReference>
<dbReference type="SUPFAM" id="SSF52540">
    <property type="entry name" value="P-loop containing nucleoside triphosphate hydrolases"/>
    <property type="match status" value="1"/>
</dbReference>
<dbReference type="PROSITE" id="PS51273">
    <property type="entry name" value="GATASE_TYPE_1"/>
    <property type="match status" value="1"/>
</dbReference>